<sequence length="3419" mass="391312">MAKYGHLEASPDDGQNQFSDIIKSRSDEHNDVQKKTFTKWINARFSKSGKPPINDMFSDLKDGRKLLDLLEGLTGTSLPKERGSTRVHALNNVNRVLQVLHQNNVELVNIGGTDIVDGNPKLTLGLLWSIILHWQVKDVMKDIMSDLQQTNSEKILLSWVRQTTRPYSQVNVLNFTTSWTDGLAFNAVLHRHKPDLFSWDRVVKMSPTERLEHAFSKAHTYLGIEKLLDPEDVAVQLPDKKSIIMYLTSLFEVLPQQVTIDAIREVETLPRKYKKECEGEEINIQSAVLTEEGQSPRAETPSTVTEVDMDLDSYQIALEEVLTWLLSAEDTFQEQDDISDDVEDVKEQFATHETFMMELTAHQSSVGSVLQAGNQLMTQGTLSDEEEFEIQEQMTLLNARWEALRVESMERQSRLHDALMELQKKQLQQLSGWLTLTEERIQKMESLPVGDDLPSLQNLLEEHKSLQSDLEAEQVKVNSLTHMVVIVDENSGESATAVLEDQLQKLGERWTAVCRWTEERWNRLQEINILWQELLEEQCLLEAWLTEKEEALNKVQTGNFKDQKELGVSVRRLAILKEDMEMKRQTLDQLSEIGQDVGQLLSNPKASEKMNSDSEELTQRWDSLVQRLEDSSNQVTQAVAKLGMSQIPQKDLLETVHVREQGMIKKPKQELPPPPPPKKRQIHVDVEAKKKFDATSAELQSWILRSKAALQNTEMNEYKKSQETSGVRKKWKGLEKEQKEKIPQLDELNQTGQILQEQMGKEGLLAEEINDVLERVLLEWKMISQQLEDLGRKIQLQEDINAYFRQLDALEKTIRAKEEWLRDASFSESPQRSLPSLKDSCQRELTDLLGLHPRIEILCASCSALRSQPSVPGFVQQGFDDLRRHYQAVQKALEEYQQQLENELKSQPEPAYLDTLNTLKKMLSESEKAAQASLSALNDPSAVEQALQEKKALDETLENQKPTLHKLSEETKALEKNMLPDVGKTYRQEFDDAQGKWNKVKTKVSRDLRSLEEIIPRLRDFKADSEVIEKWTNGVKDFLMKEQAAQGDTTALQRQLDQCTTFANEIETIESSLKNLRDIETSLQRCPVTGVKTWVQTRLADYQSQLEKFSQEIDIQKSRLSDSQEKAMNLKKDLAEMQEWMAQAEEDYLERDFEYKSPEELESAVEEMKRAKEDVLQKEVRVKILKDSIKLVAARVPSGGQELTSEFNEVLESYQLLCNRIRGKCHTLEEVWSCWVELLHYLDLETSWLNTLEERMQSTEALPERAEAVHDALESLESVLRHPADNRTQIRELGQTLIDGGILDDIISEKLEAFNSRYEELSHLAESKQISLEKQLQVLRETDHMLQVLKESLGELDKQLTTYLTDRIDAFQLPQEAQKIQAEISAHELTLEELKKNVRPQPPTSPEGRTTRGGSQMDLLQRKLREVSTKFQLFQKPANFEQRMLDCKRVLDGVKAELHVLSVKDVDPDVIQTHLDKCMKLYKTLSEVKLEVETVIKTGRHIVQKQQTDNPKGMDEQLTSLKVLYNDLGAQVTEGKQDLERASQLSRKLKKEAAILSEWLSTTEAELVQKSTSEGVIGDLDTEISWAKNILKDLERRKVDLNAITESSAALQHLVVGSESVLEDTLCVLNAGWSRVRTWTEDWRNTLLNHQNQLEVFDGHVAHISTWLYQAEALLDEIEKKPASKQEEIVKRLLSELSDASIQVENVREQAIVLVNARGSSSRELVEPKLAELSKNFEKVSQHINSAQMLIGQDPAGTVEAVGPFSDLESLESDIENMLKVVEKHLDPSNDEKMDEERAQIEEVLQRGEHLLHEPMEDSKKEKIRLQLLLLHTRYNKIKAIPQRKTIPLSSGIMSSALPADYLVEINKILLTLDDIELSLNIPELNTTVYEDFSFQEDSLKRIKDQLDRLGEQLAAVHEKQPDVILEASGPEAIQIRDMLSQLNAKWDRVNRLYSDRRGSFARAVEEWKQFHCDLDDLTQWLSEAEDLLVGTCAPDGSLDLEKARTHQLELEDGLSSHQPCLIDVNQKGEDIVQRLRPSDASFLKDKLASLNQRWSALVAEVKDLQPRLKGESKQVSGYRKRLDEVVCWLTKVENAVQKRSTPDPEENPWELTDLAQEMDAQAENIKWLNRAELEMLSDKNLSLCERDNLSESLRNVNTMWTKICREVPSLLKTRTQDPCSAPQTRIAAHPNVQKVALVSSASDAPLRGPEISVPADLDKTITELADWLVLIDQMLKSNIVTVGDVKEINKTVSRMKITKADLEQRHPQLDFVFTLAQNLKNKASSSDLRTAITEKLEKLKTQWESTQHGVELRRQQLEDMVVDSLQWDDHREETEELMRKHEARFYMLQQARRDPLSKQVSDNQLLLQELGSGDGVIMAFDNVLQKLLEEYSSDDTRNVEETTEYLKTSWINLKQSIADRQSALEAELRTVQTSRRDLENFVKWLQEAETTANVLADASQRENALQDSVLARQLRQQMLDIQAEIDAHNDIFKSIDGNRQKMVKALGNSEEATMLQHRLDDMNQRWNDLKAKSASIRAHLEASAEKWNRLLASLEELIKWLNMKDEELKKQMPIGGDVPALQLQYDHCKVLRRELKEKEYSVLNAVDQARVFLADQPIEAPEEPRRNPQSKTELTPEERAQKIAKAMRKQSSEVREKWESLNAVTSTWQKQVGKALEKLRDLQGAVDDLDADMKEVEAVRNGWKPVGDLLIDSLQDHIEKTLAFREEIAPINLKVKTMNDLSSQLSPLDLHPSPKMSRQLDDLNMRWKLLQVSVEDRLKQLQEAHRDFGPSSQHFLSTSVQLPWQRSISHNKVPYYINHQTQTTCWDHPKMTELFQSLGDLNNVRFSAYRTAIKIRRLQKALCLDLLELNTTNEVFKQHKLNQNDQLLSVPDVINCLTTTYDGLEQLHKDLVNVPLCVDMCLNWLLNVYDTGRTGKIRVQSLKIGLMSLSKGLLEEKYRCLFKEVAGPTEMCDQRQLGLLLHDAIQIPRQLGEVAAFGGSNIEPSVRSCFQQNNNKPEISVKEFIDWMRLEPQSMVWLPVLHRVAAAETAKHQAKCNICKECPIVGFRYRSLKHFNYDVCQSCFFSGRTAKGHKLHYPMVEYCIPTTSGEDVRDFTKVLKNKFRSKKYFAKHPRLGYLPVQTVLEGDNLETPITLISMWPEHYDPSQSPQLFHDDTHSRIEQYATRLAQMERTNGSFLTDSSSTTGSVEDEHALIQQYCQTLGGESPVSQPQSPAQILKSVEKEERGELERIIADLEEEQRNLQVEYEQLKEQHLRRGLPLGSPPDSIVSPYHTSEDSELIAEAKLLRQHKGRLEARMQILEDHNKQLESQLHRLRQLLEQPDSDSRINGVSPWASPQHPSLSYSLDPDPGPQSHQAASEDLLAPPHDTSTDLTDVMEQLNSTFPSCSPNVPSRPQAI</sequence>
<evidence type="ECO:0000250" key="1"/>
<evidence type="ECO:0000250" key="2">
    <source>
        <dbReference type="UniProtKB" id="P46939"/>
    </source>
</evidence>
<evidence type="ECO:0000255" key="3"/>
<evidence type="ECO:0000255" key="4">
    <source>
        <dbReference type="PROSITE-ProRule" id="PRU00044"/>
    </source>
</evidence>
<evidence type="ECO:0000255" key="5">
    <source>
        <dbReference type="PROSITE-ProRule" id="PRU00224"/>
    </source>
</evidence>
<evidence type="ECO:0000255" key="6">
    <source>
        <dbReference type="PROSITE-ProRule" id="PRU00228"/>
    </source>
</evidence>
<evidence type="ECO:0000256" key="7">
    <source>
        <dbReference type="SAM" id="MobiDB-lite"/>
    </source>
</evidence>
<evidence type="ECO:0000269" key="8">
    <source>
    </source>
</evidence>
<evidence type="ECO:0000269" key="9">
    <source>
    </source>
</evidence>
<evidence type="ECO:0000305" key="10"/>
<evidence type="ECO:0000312" key="11">
    <source>
        <dbReference type="EMBL" id="EDL93719.1"/>
    </source>
</evidence>
<evidence type="ECO:0000312" key="12">
    <source>
        <dbReference type="RGD" id="3947"/>
    </source>
</evidence>
<evidence type="ECO:0007744" key="13">
    <source>
    </source>
</evidence>
<evidence type="ECO:0007744" key="14">
    <source>
    </source>
</evidence>
<gene>
    <name evidence="12" type="primary">Utrn</name>
    <name evidence="11" type="ORF">rCG_57340</name>
</gene>
<dbReference type="EMBL" id="AABR07000248">
    <property type="status" value="NOT_ANNOTATED_CDS"/>
    <property type="molecule type" value="Genomic_DNA"/>
</dbReference>
<dbReference type="EMBL" id="AABR07000249">
    <property type="status" value="NOT_ANNOTATED_CDS"/>
    <property type="molecule type" value="Genomic_DNA"/>
</dbReference>
<dbReference type="EMBL" id="AABR07000250">
    <property type="status" value="NOT_ANNOTATED_CDS"/>
    <property type="molecule type" value="Genomic_DNA"/>
</dbReference>
<dbReference type="EMBL" id="AABR07000251">
    <property type="status" value="NOT_ANNOTATED_CDS"/>
    <property type="molecule type" value="Genomic_DNA"/>
</dbReference>
<dbReference type="EMBL" id="AABR07000252">
    <property type="status" value="NOT_ANNOTATED_CDS"/>
    <property type="molecule type" value="Genomic_DNA"/>
</dbReference>
<dbReference type="EMBL" id="AABR07000253">
    <property type="status" value="NOT_ANNOTATED_CDS"/>
    <property type="molecule type" value="Genomic_DNA"/>
</dbReference>
<dbReference type="EMBL" id="AABR07000254">
    <property type="status" value="NOT_ANNOTATED_CDS"/>
    <property type="molecule type" value="Genomic_DNA"/>
</dbReference>
<dbReference type="EMBL" id="AABR07000255">
    <property type="status" value="NOT_ANNOTATED_CDS"/>
    <property type="molecule type" value="Genomic_DNA"/>
</dbReference>
<dbReference type="EMBL" id="AABR07000256">
    <property type="status" value="NOT_ANNOTATED_CDS"/>
    <property type="molecule type" value="Genomic_DNA"/>
</dbReference>
<dbReference type="EMBL" id="CH473994">
    <property type="protein sequence ID" value="EDL93719.1"/>
    <property type="molecule type" value="Genomic_DNA"/>
</dbReference>
<dbReference type="RefSeq" id="NP_037202.2">
    <property type="nucleotide sequence ID" value="NM_013070.2"/>
</dbReference>
<dbReference type="RefSeq" id="XP_008756815.1">
    <property type="nucleotide sequence ID" value="XM_008758593.3"/>
</dbReference>
<dbReference type="RefSeq" id="XP_008756816.1">
    <property type="nucleotide sequence ID" value="XM_008758594.4"/>
</dbReference>
<dbReference type="SMR" id="G3V7L1"/>
<dbReference type="FunCoup" id="G3V7L1">
    <property type="interactions" value="2232"/>
</dbReference>
<dbReference type="IntAct" id="G3V7L1">
    <property type="interactions" value="1"/>
</dbReference>
<dbReference type="PhosphoSitePlus" id="G3V7L1"/>
<dbReference type="jPOST" id="G3V7L1"/>
<dbReference type="PaxDb" id="10116-ENSRNOP00000016273"/>
<dbReference type="PeptideAtlas" id="G3V7L1"/>
<dbReference type="Ensembl" id="ENSRNOT00000016273.6">
    <property type="protein sequence ID" value="ENSRNOP00000016273.7"/>
    <property type="gene ID" value="ENSRNOG00000011058.8"/>
</dbReference>
<dbReference type="GeneID" id="25600"/>
<dbReference type="AGR" id="RGD:3947"/>
<dbReference type="CTD" id="7402"/>
<dbReference type="RGD" id="3947">
    <property type="gene designation" value="Utrn"/>
</dbReference>
<dbReference type="eggNOG" id="KOG4286">
    <property type="taxonomic scope" value="Eukaryota"/>
</dbReference>
<dbReference type="GeneTree" id="ENSGT00940000153467"/>
<dbReference type="HOGENOM" id="CLU_000246_2_0_1"/>
<dbReference type="InParanoid" id="G3V7L1"/>
<dbReference type="Reactome" id="R-RNO-9913351">
    <property type="pathway name" value="Formation of the dystrophin-glycoprotein complex (DGC)"/>
</dbReference>
<dbReference type="PRO" id="PR:G3V7L1"/>
<dbReference type="Proteomes" id="UP000002494">
    <property type="component" value="Chromosome 1"/>
</dbReference>
<dbReference type="Proteomes" id="UP000234681">
    <property type="component" value="Chromosome 1"/>
</dbReference>
<dbReference type="ExpressionAtlas" id="G3V7L1">
    <property type="expression patterns" value="baseline and differential"/>
</dbReference>
<dbReference type="GO" id="GO:0070938">
    <property type="term" value="C:contractile ring"/>
    <property type="evidence" value="ECO:0000266"/>
    <property type="project" value="RGD"/>
</dbReference>
<dbReference type="GO" id="GO:0030864">
    <property type="term" value="C:cortical actin cytoskeleton"/>
    <property type="evidence" value="ECO:0000314"/>
    <property type="project" value="RGD"/>
</dbReference>
<dbReference type="GO" id="GO:0005737">
    <property type="term" value="C:cytoplasm"/>
    <property type="evidence" value="ECO:0000266"/>
    <property type="project" value="RGD"/>
</dbReference>
<dbReference type="GO" id="GO:0016010">
    <property type="term" value="C:dystrophin-associated glycoprotein complex"/>
    <property type="evidence" value="ECO:0000266"/>
    <property type="project" value="RGD"/>
</dbReference>
<dbReference type="GO" id="GO:0030175">
    <property type="term" value="C:filopodium"/>
    <property type="evidence" value="ECO:0000266"/>
    <property type="project" value="RGD"/>
</dbReference>
<dbReference type="GO" id="GO:0031527">
    <property type="term" value="C:filopodium membrane"/>
    <property type="evidence" value="ECO:0000266"/>
    <property type="project" value="RGD"/>
</dbReference>
<dbReference type="GO" id="GO:0030426">
    <property type="term" value="C:growth cone"/>
    <property type="evidence" value="ECO:0000314"/>
    <property type="project" value="RGD"/>
</dbReference>
<dbReference type="GO" id="GO:0031594">
    <property type="term" value="C:neuromuscular junction"/>
    <property type="evidence" value="ECO:0000314"/>
    <property type="project" value="RGD"/>
</dbReference>
<dbReference type="GO" id="GO:0005886">
    <property type="term" value="C:plasma membrane"/>
    <property type="evidence" value="ECO:0000318"/>
    <property type="project" value="GO_Central"/>
</dbReference>
<dbReference type="GO" id="GO:0045211">
    <property type="term" value="C:postsynaptic membrane"/>
    <property type="evidence" value="ECO:0007669"/>
    <property type="project" value="UniProtKB-SubCell"/>
</dbReference>
<dbReference type="GO" id="GO:0032991">
    <property type="term" value="C:protein-containing complex"/>
    <property type="evidence" value="ECO:0000266"/>
    <property type="project" value="RGD"/>
</dbReference>
<dbReference type="GO" id="GO:0042383">
    <property type="term" value="C:sarcolemma"/>
    <property type="evidence" value="ECO:0000266"/>
    <property type="project" value="RGD"/>
</dbReference>
<dbReference type="GO" id="GO:0045202">
    <property type="term" value="C:synapse"/>
    <property type="evidence" value="ECO:0000266"/>
    <property type="project" value="RGD"/>
</dbReference>
<dbReference type="GO" id="GO:0003779">
    <property type="term" value="F:actin binding"/>
    <property type="evidence" value="ECO:0000266"/>
    <property type="project" value="RGD"/>
</dbReference>
<dbReference type="GO" id="GO:0051015">
    <property type="term" value="F:actin filament binding"/>
    <property type="evidence" value="ECO:0000314"/>
    <property type="project" value="RGD"/>
</dbReference>
<dbReference type="GO" id="GO:0005178">
    <property type="term" value="F:integrin binding"/>
    <property type="evidence" value="ECO:0000266"/>
    <property type="project" value="RGD"/>
</dbReference>
<dbReference type="GO" id="GO:0019901">
    <property type="term" value="F:protein kinase binding"/>
    <property type="evidence" value="ECO:0000266"/>
    <property type="project" value="RGD"/>
</dbReference>
<dbReference type="GO" id="GO:0017166">
    <property type="term" value="F:vinculin binding"/>
    <property type="evidence" value="ECO:0000266"/>
    <property type="project" value="RGD"/>
</dbReference>
<dbReference type="GO" id="GO:0008270">
    <property type="term" value="F:zinc ion binding"/>
    <property type="evidence" value="ECO:0007669"/>
    <property type="project" value="UniProtKB-KW"/>
</dbReference>
<dbReference type="GO" id="GO:0007528">
    <property type="term" value="P:neuromuscular junction development"/>
    <property type="evidence" value="ECO:0000314"/>
    <property type="project" value="RGD"/>
</dbReference>
<dbReference type="GO" id="GO:0001954">
    <property type="term" value="P:positive regulation of cell-matrix adhesion"/>
    <property type="evidence" value="ECO:0000266"/>
    <property type="project" value="RGD"/>
</dbReference>
<dbReference type="GO" id="GO:0014894">
    <property type="term" value="P:response to denervation involved in regulation of muscle adaptation"/>
    <property type="evidence" value="ECO:0000270"/>
    <property type="project" value="RGD"/>
</dbReference>
<dbReference type="GO" id="GO:0099536">
    <property type="term" value="P:synaptic signaling"/>
    <property type="evidence" value="ECO:0000318"/>
    <property type="project" value="GO_Central"/>
</dbReference>
<dbReference type="CDD" id="cd21232">
    <property type="entry name" value="CH_UTRN_rpt1"/>
    <property type="match status" value="1"/>
</dbReference>
<dbReference type="CDD" id="cd21234">
    <property type="entry name" value="CH_UTRN_rpt2"/>
    <property type="match status" value="1"/>
</dbReference>
<dbReference type="CDD" id="cd16247">
    <property type="entry name" value="EFh_UTRO"/>
    <property type="match status" value="1"/>
</dbReference>
<dbReference type="CDD" id="cd00176">
    <property type="entry name" value="SPEC"/>
    <property type="match status" value="9"/>
</dbReference>
<dbReference type="CDD" id="cd00201">
    <property type="entry name" value="WW"/>
    <property type="match status" value="1"/>
</dbReference>
<dbReference type="CDD" id="cd02334">
    <property type="entry name" value="ZZ_dystrophin"/>
    <property type="match status" value="1"/>
</dbReference>
<dbReference type="FunFam" id="1.20.58.60:FF:000118">
    <property type="entry name" value="Dystrophin"/>
    <property type="match status" value="1"/>
</dbReference>
<dbReference type="FunFam" id="1.10.238.10:FF:000008">
    <property type="entry name" value="Dystrophin isoform 2"/>
    <property type="match status" value="1"/>
</dbReference>
<dbReference type="FunFam" id="3.30.60.90:FF:000001">
    <property type="entry name" value="Dystrophin isoform 2"/>
    <property type="match status" value="1"/>
</dbReference>
<dbReference type="FunFam" id="1.20.58.60:FF:000140">
    <property type="entry name" value="dystrophin isoform X1"/>
    <property type="match status" value="1"/>
</dbReference>
<dbReference type="FunFam" id="2.20.70.10:FF:000004">
    <property type="entry name" value="dystrophin isoform X1"/>
    <property type="match status" value="1"/>
</dbReference>
<dbReference type="FunFam" id="1.20.58.60:FF:000091">
    <property type="entry name" value="dystrophin isoform X2"/>
    <property type="match status" value="1"/>
</dbReference>
<dbReference type="FunFam" id="1.20.58.60:FF:000276">
    <property type="entry name" value="Utrophin"/>
    <property type="match status" value="1"/>
</dbReference>
<dbReference type="FunFam" id="1.20.58.60:FF:000395">
    <property type="entry name" value="Utrophin"/>
    <property type="match status" value="1"/>
</dbReference>
<dbReference type="FunFam" id="1.10.418.10:FF:000032">
    <property type="entry name" value="utrophin isoform X1"/>
    <property type="match status" value="1"/>
</dbReference>
<dbReference type="FunFam" id="1.20.58.60:FF:000029">
    <property type="entry name" value="utrophin isoform X1"/>
    <property type="match status" value="1"/>
</dbReference>
<dbReference type="FunFam" id="1.20.58.60:FF:000056">
    <property type="entry name" value="utrophin isoform X1"/>
    <property type="match status" value="1"/>
</dbReference>
<dbReference type="FunFam" id="1.20.58.60:FF:000070">
    <property type="entry name" value="utrophin isoform X1"/>
    <property type="match status" value="1"/>
</dbReference>
<dbReference type="FunFam" id="1.20.58.60:FF:000075">
    <property type="entry name" value="utrophin isoform X1"/>
    <property type="match status" value="1"/>
</dbReference>
<dbReference type="FunFam" id="1.10.418.10:FF:000044">
    <property type="entry name" value="utrophin isoform X2"/>
    <property type="match status" value="1"/>
</dbReference>
<dbReference type="FunFam" id="1.20.58.60:FF:000102">
    <property type="entry name" value="utrophin isoform X2"/>
    <property type="match status" value="1"/>
</dbReference>
<dbReference type="FunFam" id="1.20.58.60:FF:000147">
    <property type="entry name" value="utrophin isoform X2"/>
    <property type="match status" value="1"/>
</dbReference>
<dbReference type="Gene3D" id="1.20.58.60">
    <property type="match status" value="14"/>
</dbReference>
<dbReference type="Gene3D" id="2.20.70.10">
    <property type="match status" value="1"/>
</dbReference>
<dbReference type="Gene3D" id="3.30.60.90">
    <property type="match status" value="1"/>
</dbReference>
<dbReference type="Gene3D" id="1.10.418.10">
    <property type="entry name" value="Calponin-like domain"/>
    <property type="match status" value="2"/>
</dbReference>
<dbReference type="Gene3D" id="1.10.238.10">
    <property type="entry name" value="EF-hand"/>
    <property type="match status" value="2"/>
</dbReference>
<dbReference type="InterPro" id="IPR001589">
    <property type="entry name" value="Actinin_actin-bd_CS"/>
</dbReference>
<dbReference type="InterPro" id="IPR001715">
    <property type="entry name" value="CH_dom"/>
</dbReference>
<dbReference type="InterPro" id="IPR036872">
    <property type="entry name" value="CH_dom_sf"/>
</dbReference>
<dbReference type="InterPro" id="IPR035436">
    <property type="entry name" value="Dystrophin/utrophin"/>
</dbReference>
<dbReference type="InterPro" id="IPR011992">
    <property type="entry name" value="EF-hand-dom_pair"/>
</dbReference>
<dbReference type="InterPro" id="IPR015153">
    <property type="entry name" value="EF-hand_dom_typ1"/>
</dbReference>
<dbReference type="InterPro" id="IPR015154">
    <property type="entry name" value="EF-hand_dom_typ2"/>
</dbReference>
<dbReference type="InterPro" id="IPR050774">
    <property type="entry name" value="KCMF1/Dystrophin"/>
</dbReference>
<dbReference type="InterPro" id="IPR018159">
    <property type="entry name" value="Spectrin/alpha-actinin"/>
</dbReference>
<dbReference type="InterPro" id="IPR002017">
    <property type="entry name" value="Spectrin_repeat"/>
</dbReference>
<dbReference type="InterPro" id="IPR001202">
    <property type="entry name" value="WW_dom"/>
</dbReference>
<dbReference type="InterPro" id="IPR036020">
    <property type="entry name" value="WW_dom_sf"/>
</dbReference>
<dbReference type="InterPro" id="IPR000433">
    <property type="entry name" value="Znf_ZZ"/>
</dbReference>
<dbReference type="InterPro" id="IPR043145">
    <property type="entry name" value="Znf_ZZ_sf"/>
</dbReference>
<dbReference type="PANTHER" id="PTHR12268">
    <property type="entry name" value="E3 UBIQUITIN-PROTEIN LIGASE KCMF1"/>
    <property type="match status" value="1"/>
</dbReference>
<dbReference type="PANTHER" id="PTHR12268:SF26">
    <property type="entry name" value="UTROPHIN"/>
    <property type="match status" value="1"/>
</dbReference>
<dbReference type="Pfam" id="PF00307">
    <property type="entry name" value="CH"/>
    <property type="match status" value="2"/>
</dbReference>
<dbReference type="Pfam" id="PF09068">
    <property type="entry name" value="EF-hand_2"/>
    <property type="match status" value="1"/>
</dbReference>
<dbReference type="Pfam" id="PF09069">
    <property type="entry name" value="EF-hand_3"/>
    <property type="match status" value="1"/>
</dbReference>
<dbReference type="Pfam" id="PF00435">
    <property type="entry name" value="Spectrin"/>
    <property type="match status" value="9"/>
</dbReference>
<dbReference type="Pfam" id="PF00569">
    <property type="entry name" value="ZZ"/>
    <property type="match status" value="1"/>
</dbReference>
<dbReference type="PIRSF" id="PIRSF002341">
    <property type="entry name" value="Dystrophin/utrophin"/>
    <property type="match status" value="1"/>
</dbReference>
<dbReference type="SMART" id="SM00033">
    <property type="entry name" value="CH"/>
    <property type="match status" value="2"/>
</dbReference>
<dbReference type="SMART" id="SM00150">
    <property type="entry name" value="SPEC"/>
    <property type="match status" value="20"/>
</dbReference>
<dbReference type="SMART" id="SM00456">
    <property type="entry name" value="WW"/>
    <property type="match status" value="1"/>
</dbReference>
<dbReference type="SMART" id="SM00291">
    <property type="entry name" value="ZnF_ZZ"/>
    <property type="match status" value="1"/>
</dbReference>
<dbReference type="SUPFAM" id="SSF47576">
    <property type="entry name" value="Calponin-homology domain, CH-domain"/>
    <property type="match status" value="1"/>
</dbReference>
<dbReference type="SUPFAM" id="SSF47473">
    <property type="entry name" value="EF-hand"/>
    <property type="match status" value="2"/>
</dbReference>
<dbReference type="SUPFAM" id="SSF57850">
    <property type="entry name" value="RING/U-box"/>
    <property type="match status" value="1"/>
</dbReference>
<dbReference type="SUPFAM" id="SSF46966">
    <property type="entry name" value="Spectrin repeat"/>
    <property type="match status" value="16"/>
</dbReference>
<dbReference type="SUPFAM" id="SSF51045">
    <property type="entry name" value="WW domain"/>
    <property type="match status" value="1"/>
</dbReference>
<dbReference type="PROSITE" id="PS00019">
    <property type="entry name" value="ACTININ_1"/>
    <property type="match status" value="1"/>
</dbReference>
<dbReference type="PROSITE" id="PS00020">
    <property type="entry name" value="ACTININ_2"/>
    <property type="match status" value="1"/>
</dbReference>
<dbReference type="PROSITE" id="PS50021">
    <property type="entry name" value="CH"/>
    <property type="match status" value="2"/>
</dbReference>
<dbReference type="PROSITE" id="PS01159">
    <property type="entry name" value="WW_DOMAIN_1"/>
    <property type="match status" value="1"/>
</dbReference>
<dbReference type="PROSITE" id="PS50020">
    <property type="entry name" value="WW_DOMAIN_2"/>
    <property type="match status" value="1"/>
</dbReference>
<dbReference type="PROSITE" id="PS01357">
    <property type="entry name" value="ZF_ZZ_1"/>
    <property type="match status" value="1"/>
</dbReference>
<dbReference type="PROSITE" id="PS50135">
    <property type="entry name" value="ZF_ZZ_2"/>
    <property type="match status" value="1"/>
</dbReference>
<reference key="1">
    <citation type="journal article" date="2004" name="Nature">
        <title>Genome sequence of the Brown Norway rat yields insights into mammalian evolution.</title>
        <authorList>
            <person name="Gibbs R.A."/>
            <person name="Weinstock G.M."/>
            <person name="Metzker M.L."/>
            <person name="Muzny D.M."/>
            <person name="Sodergren E.J."/>
            <person name="Scherer S."/>
            <person name="Scott G."/>
            <person name="Steffen D."/>
            <person name="Worley K.C."/>
            <person name="Burch P.E."/>
            <person name="Okwuonu G."/>
            <person name="Hines S."/>
            <person name="Lewis L."/>
            <person name="Deramo C."/>
            <person name="Delgado O."/>
            <person name="Dugan-Rocha S."/>
            <person name="Miner G."/>
            <person name="Morgan M."/>
            <person name="Hawes A."/>
            <person name="Gill R."/>
            <person name="Holt R.A."/>
            <person name="Adams M.D."/>
            <person name="Amanatides P.G."/>
            <person name="Baden-Tillson H."/>
            <person name="Barnstead M."/>
            <person name="Chin S."/>
            <person name="Evans C.A."/>
            <person name="Ferriera S."/>
            <person name="Fosler C."/>
            <person name="Glodek A."/>
            <person name="Gu Z."/>
            <person name="Jennings D."/>
            <person name="Kraft C.L."/>
            <person name="Nguyen T."/>
            <person name="Pfannkoch C.M."/>
            <person name="Sitter C."/>
            <person name="Sutton G.G."/>
            <person name="Venter J.C."/>
            <person name="Woodage T."/>
            <person name="Smith D."/>
            <person name="Lee H.-M."/>
            <person name="Gustafson E."/>
            <person name="Cahill P."/>
            <person name="Kana A."/>
            <person name="Doucette-Stamm L."/>
            <person name="Weinstock K."/>
            <person name="Fechtel K."/>
            <person name="Weiss R.B."/>
            <person name="Dunn D.M."/>
            <person name="Green E.D."/>
            <person name="Blakesley R.W."/>
            <person name="Bouffard G.G."/>
            <person name="De Jong P.J."/>
            <person name="Osoegawa K."/>
            <person name="Zhu B."/>
            <person name="Marra M."/>
            <person name="Schein J."/>
            <person name="Bosdet I."/>
            <person name="Fjell C."/>
            <person name="Jones S."/>
            <person name="Krzywinski M."/>
            <person name="Mathewson C."/>
            <person name="Siddiqui A."/>
            <person name="Wye N."/>
            <person name="McPherson J."/>
            <person name="Zhao S."/>
            <person name="Fraser C.M."/>
            <person name="Shetty J."/>
            <person name="Shatsman S."/>
            <person name="Geer K."/>
            <person name="Chen Y."/>
            <person name="Abramzon S."/>
            <person name="Nierman W.C."/>
            <person name="Havlak P.H."/>
            <person name="Chen R."/>
            <person name="Durbin K.J."/>
            <person name="Egan A."/>
            <person name="Ren Y."/>
            <person name="Song X.-Z."/>
            <person name="Li B."/>
            <person name="Liu Y."/>
            <person name="Qin X."/>
            <person name="Cawley S."/>
            <person name="Cooney A.J."/>
            <person name="D'Souza L.M."/>
            <person name="Martin K."/>
            <person name="Wu J.Q."/>
            <person name="Gonzalez-Garay M.L."/>
            <person name="Jackson A.R."/>
            <person name="Kalafus K.J."/>
            <person name="McLeod M.P."/>
            <person name="Milosavljevic A."/>
            <person name="Virk D."/>
            <person name="Volkov A."/>
            <person name="Wheeler D.A."/>
            <person name="Zhang Z."/>
            <person name="Bailey J.A."/>
            <person name="Eichler E.E."/>
            <person name="Tuzun E."/>
            <person name="Birney E."/>
            <person name="Mongin E."/>
            <person name="Ureta-Vidal A."/>
            <person name="Woodwark C."/>
            <person name="Zdobnov E."/>
            <person name="Bork P."/>
            <person name="Suyama M."/>
            <person name="Torrents D."/>
            <person name="Alexandersson M."/>
            <person name="Trask B.J."/>
            <person name="Young J.M."/>
            <person name="Huang H."/>
            <person name="Wang H."/>
            <person name="Xing H."/>
            <person name="Daniels S."/>
            <person name="Gietzen D."/>
            <person name="Schmidt J."/>
            <person name="Stevens K."/>
            <person name="Vitt U."/>
            <person name="Wingrove J."/>
            <person name="Camara F."/>
            <person name="Mar Alba M."/>
            <person name="Abril J.F."/>
            <person name="Guigo R."/>
            <person name="Smit A."/>
            <person name="Dubchak I."/>
            <person name="Rubin E.M."/>
            <person name="Couronne O."/>
            <person name="Poliakov A."/>
            <person name="Huebner N."/>
            <person name="Ganten D."/>
            <person name="Goesele C."/>
            <person name="Hummel O."/>
            <person name="Kreitler T."/>
            <person name="Lee Y.-A."/>
            <person name="Monti J."/>
            <person name="Schulz H."/>
            <person name="Zimdahl H."/>
            <person name="Himmelbauer H."/>
            <person name="Lehrach H."/>
            <person name="Jacob H.J."/>
            <person name="Bromberg S."/>
            <person name="Gullings-Handley J."/>
            <person name="Jensen-Seaman M.I."/>
            <person name="Kwitek A.E."/>
            <person name="Lazar J."/>
            <person name="Pasko D."/>
            <person name="Tonellato P.J."/>
            <person name="Twigger S."/>
            <person name="Ponting C.P."/>
            <person name="Duarte J.M."/>
            <person name="Rice S."/>
            <person name="Goodstadt L."/>
            <person name="Beatson S.A."/>
            <person name="Emes R.D."/>
            <person name="Winter E.E."/>
            <person name="Webber C."/>
            <person name="Brandt P."/>
            <person name="Nyakatura G."/>
            <person name="Adetobi M."/>
            <person name="Chiaromonte F."/>
            <person name="Elnitski L."/>
            <person name="Eswara P."/>
            <person name="Hardison R.C."/>
            <person name="Hou M."/>
            <person name="Kolbe D."/>
            <person name="Makova K."/>
            <person name="Miller W."/>
            <person name="Nekrutenko A."/>
            <person name="Riemer C."/>
            <person name="Schwartz S."/>
            <person name="Taylor J."/>
            <person name="Yang S."/>
            <person name="Zhang Y."/>
            <person name="Lindpaintner K."/>
            <person name="Andrews T.D."/>
            <person name="Caccamo M."/>
            <person name="Clamp M."/>
            <person name="Clarke L."/>
            <person name="Curwen V."/>
            <person name="Durbin R.M."/>
            <person name="Eyras E."/>
            <person name="Searle S.M."/>
            <person name="Cooper G.M."/>
            <person name="Batzoglou S."/>
            <person name="Brudno M."/>
            <person name="Sidow A."/>
            <person name="Stone E.A."/>
            <person name="Payseur B.A."/>
            <person name="Bourque G."/>
            <person name="Lopez-Otin C."/>
            <person name="Puente X.S."/>
            <person name="Chakrabarti K."/>
            <person name="Chatterji S."/>
            <person name="Dewey C."/>
            <person name="Pachter L."/>
            <person name="Bray N."/>
            <person name="Yap V.B."/>
            <person name="Caspi A."/>
            <person name="Tesler G."/>
            <person name="Pevzner P.A."/>
            <person name="Haussler D."/>
            <person name="Roskin K.M."/>
            <person name="Baertsch R."/>
            <person name="Clawson H."/>
            <person name="Furey T.S."/>
            <person name="Hinrichs A.S."/>
            <person name="Karolchik D."/>
            <person name="Kent W.J."/>
            <person name="Rosenbloom K.R."/>
            <person name="Trumbower H."/>
            <person name="Weirauch M."/>
            <person name="Cooper D.N."/>
            <person name="Stenson P.D."/>
            <person name="Ma B."/>
            <person name="Brent M."/>
            <person name="Arumugam M."/>
            <person name="Shteynberg D."/>
            <person name="Copley R.R."/>
            <person name="Taylor M.S."/>
            <person name="Riethman H."/>
            <person name="Mudunuri U."/>
            <person name="Peterson J."/>
            <person name="Guyer M."/>
            <person name="Felsenfeld A."/>
            <person name="Old S."/>
            <person name="Mockrin S."/>
            <person name="Collins F.S."/>
        </authorList>
    </citation>
    <scope>NUCLEOTIDE SEQUENCE [LARGE SCALE GENOMIC DNA]</scope>
    <source>
        <strain>Brown Norway</strain>
    </source>
</reference>
<reference key="2">
    <citation type="submission" date="2005-07" db="EMBL/GenBank/DDBJ databases">
        <authorList>
            <person name="Mural R.J."/>
            <person name="Adams M.D."/>
            <person name="Myers E.W."/>
            <person name="Smith H.O."/>
            <person name="Venter J.C."/>
        </authorList>
    </citation>
    <scope>NUCLEOTIDE SEQUENCE [LARGE SCALE GENOMIC DNA]</scope>
</reference>
<reference key="3">
    <citation type="journal article" date="1995" name="J. Biol. Chem.">
        <title>Association of aciculin with dystrophin and utrophin.</title>
        <authorList>
            <person name="Belkin A.M."/>
            <person name="Burridge K."/>
        </authorList>
    </citation>
    <scope>INTERACTION WITH PGM5</scope>
</reference>
<reference key="4">
    <citation type="journal article" date="1999" name="J. Cell Biol.">
        <title>Different dystrophin-like complexes are expressed in neurons and glia.</title>
        <authorList>
            <person name="Blake D.J."/>
            <person name="Hawkes R."/>
            <person name="Benson M.A."/>
            <person name="Beesley P.W."/>
        </authorList>
    </citation>
    <scope>INTERACTION WITH DTNB</scope>
</reference>
<reference evidence="13" key="5">
    <citation type="journal article" date="2006" name="Proc. Natl. Acad. Sci. U.S.A.">
        <title>Quantitative phosphoproteomics of vasopressin-sensitive renal cells: regulation of aquaporin-2 phosphorylation at two sites.</title>
        <authorList>
            <person name="Hoffert J.D."/>
            <person name="Pisitkun T."/>
            <person name="Wang G."/>
            <person name="Shen R.-F."/>
            <person name="Knepper M.A."/>
        </authorList>
    </citation>
    <scope>IDENTIFICATION BY MASS SPECTROMETRY [LARGE SCALE ANALYSIS]</scope>
</reference>
<reference evidence="14" key="6">
    <citation type="journal article" date="2012" name="Nat. Commun.">
        <title>Quantitative maps of protein phosphorylation sites across 14 different rat organs and tissues.</title>
        <authorList>
            <person name="Lundby A."/>
            <person name="Secher A."/>
            <person name="Lage K."/>
            <person name="Nordsborg N.B."/>
            <person name="Dmytriyev A."/>
            <person name="Lundby C."/>
            <person name="Olsen J.V."/>
        </authorList>
    </citation>
    <scope>IDENTIFICATION BY MASS SPECTROMETRY [LARGE SCALE ANALYSIS]</scope>
</reference>
<accession>G3V7L1</accession>
<feature type="chain" id="PRO_0000452823" description="Utrophin">
    <location>
        <begin position="1"/>
        <end position="3419"/>
    </location>
</feature>
<feature type="domain" description="Calponin-homology (CH) 1" evidence="4">
    <location>
        <begin position="31"/>
        <end position="135"/>
    </location>
</feature>
<feature type="domain" description="Calponin-homology (CH) 2" evidence="4">
    <location>
        <begin position="150"/>
        <end position="255"/>
    </location>
</feature>
<feature type="repeat" description="Spectrin 1" evidence="3">
    <location>
        <begin position="312"/>
        <end position="416"/>
    </location>
</feature>
<feature type="repeat" description="Spectrin 2" evidence="3">
    <location>
        <begin position="421"/>
        <end position="525"/>
    </location>
</feature>
<feature type="repeat" description="Spectrin 3" evidence="3">
    <location>
        <begin position="532"/>
        <end position="636"/>
    </location>
</feature>
<feature type="repeat" description="Spectrin 4" evidence="3">
    <location>
        <begin position="690"/>
        <end position="795"/>
    </location>
</feature>
<feature type="repeat" description="Spectrin 5" evidence="3">
    <location>
        <begin position="801"/>
        <end position="901"/>
    </location>
</feature>
<feature type="repeat" description="Spectrin 6" evidence="3">
    <location>
        <begin position="910"/>
        <end position="1012"/>
    </location>
</feature>
<feature type="repeat" description="Spectrin 7" evidence="3">
    <location>
        <begin position="1019"/>
        <end position="1121"/>
    </location>
</feature>
<feature type="repeat" description="Spectrin 8" evidence="3">
    <location>
        <begin position="1128"/>
        <end position="1229"/>
    </location>
</feature>
<feature type="repeat" description="Spectrin 9" evidence="3">
    <location>
        <begin position="1236"/>
        <end position="1333"/>
    </location>
</feature>
<feature type="repeat" description="Spectrin 10" evidence="3">
    <location>
        <begin position="1335"/>
        <end position="1436"/>
    </location>
</feature>
<feature type="repeat" description="Spectrin 11" evidence="3">
    <location>
        <begin position="1438"/>
        <end position="1540"/>
    </location>
</feature>
<feature type="repeat" description="Spectrin 12" evidence="3">
    <location>
        <begin position="1547"/>
        <end position="1648"/>
    </location>
</feature>
<feature type="repeat" description="Spectrin 13" evidence="3">
    <location>
        <begin position="1653"/>
        <end position="1747"/>
    </location>
</feature>
<feature type="repeat" description="Spectrin 14" evidence="3">
    <location>
        <begin position="1748"/>
        <end position="1840"/>
    </location>
</feature>
<feature type="repeat" description="Spectrin 15" evidence="3">
    <location>
        <begin position="1841"/>
        <end position="1958"/>
    </location>
</feature>
<feature type="repeat" description="Spectrin 16" evidence="3">
    <location>
        <begin position="1969"/>
        <end position="2070"/>
    </location>
</feature>
<feature type="repeat" description="Spectrin 17" evidence="3">
    <location>
        <begin position="2077"/>
        <end position="2176"/>
    </location>
</feature>
<feature type="repeat" description="Spectrin 18" evidence="3">
    <location>
        <begin position="2216"/>
        <end position="2319"/>
    </location>
</feature>
<feature type="repeat" description="Spectrin 19" evidence="3">
    <location>
        <begin position="2336"/>
        <end position="2426"/>
    </location>
</feature>
<feature type="repeat" description="Spectrin 20" evidence="3">
    <location>
        <begin position="2433"/>
        <end position="2542"/>
    </location>
</feature>
<feature type="repeat" description="Spectrin 21" evidence="3">
    <location>
        <begin position="2549"/>
        <end position="2674"/>
    </location>
</feature>
<feature type="repeat" description="Spectrin 22" evidence="3">
    <location>
        <begin position="2681"/>
        <end position="2783"/>
    </location>
</feature>
<feature type="domain" description="WW" evidence="5">
    <location>
        <begin position="2799"/>
        <end position="2832"/>
    </location>
</feature>
<feature type="zinc finger region" description="ZZ-type; degenerate" evidence="6">
    <location>
        <begin position="3052"/>
        <end position="3108"/>
    </location>
</feature>
<feature type="region of interest" description="Actin-binding" evidence="2">
    <location>
        <begin position="1"/>
        <end position="246"/>
    </location>
</feature>
<feature type="region of interest" description="Interaction with SYNM" evidence="2">
    <location>
        <begin position="268"/>
        <end position="905"/>
    </location>
</feature>
<feature type="region of interest" description="Interaction with SYNM" evidence="2">
    <location>
        <begin position="1336"/>
        <end position="1761"/>
    </location>
</feature>
<feature type="region of interest" description="Disordered" evidence="7">
    <location>
        <begin position="2616"/>
        <end position="2640"/>
    </location>
</feature>
<feature type="region of interest" description="Interaction with SYNM" evidence="2">
    <location>
        <begin position="2785"/>
        <end position="3152"/>
    </location>
</feature>
<feature type="region of interest" description="Disordered" evidence="7">
    <location>
        <begin position="3277"/>
        <end position="3296"/>
    </location>
</feature>
<feature type="region of interest" description="Disordered" evidence="7">
    <location>
        <begin position="3344"/>
        <end position="3395"/>
    </location>
</feature>
<feature type="binding site" evidence="6">
    <location>
        <position position="3057"/>
    </location>
    <ligand>
        <name>Zn(2+)</name>
        <dbReference type="ChEBI" id="CHEBI:29105"/>
    </ligand>
</feature>
<feature type="binding site" evidence="6">
    <location>
        <position position="3060"/>
    </location>
    <ligand>
        <name>Zn(2+)</name>
        <dbReference type="ChEBI" id="CHEBI:29105"/>
    </ligand>
</feature>
<feature type="binding site" evidence="6">
    <location>
        <position position="3081"/>
    </location>
    <ligand>
        <name>Zn(2+)</name>
        <dbReference type="ChEBI" id="CHEBI:29105"/>
    </ligand>
</feature>
<feature type="binding site" evidence="6">
    <location>
        <position position="3084"/>
    </location>
    <ligand>
        <name>Zn(2+)</name>
        <dbReference type="ChEBI" id="CHEBI:29105"/>
    </ligand>
</feature>
<feature type="modified residue" description="Phosphotyrosine" evidence="2">
    <location>
        <position position="4"/>
    </location>
</feature>
<feature type="modified residue" description="Phosphoserine" evidence="2">
    <location>
        <position position="10"/>
    </location>
</feature>
<feature type="modified residue" description="Phosphoserine" evidence="2">
    <location>
        <position position="295"/>
    </location>
</feature>
<feature type="modified residue" description="Phosphoserine" evidence="2">
    <location>
        <position position="1998"/>
    </location>
</feature>
<feature type="modified residue" description="Phosphoserine" evidence="2">
    <location>
        <position position="2201"/>
    </location>
</feature>
<feature type="modified residue" description="Phosphoserine" evidence="2">
    <location>
        <position position="3284"/>
    </location>
</feature>
<comment type="function">
    <text evidence="1">May play a role in anchoring the cytoskeleton to the plasma membrane.</text>
</comment>
<comment type="subunit">
    <text evidence="2 8 9">Homodimer. Interacts with the syntrophins SNTA1; SNTB1 and SNTB2. Interacts with SYNM. Interacts (via its WWW and ZZ domains) with DAG1 (via the PPXY motif of betaDAG1); the interaction is inhibited by the tyrosine phosphorylation of the PPXY motif of DAG1 (By similarity). Interacts with DTNB (PubMed:10545507). Interacts with PGM5 (PubMed:7890770).</text>
</comment>
<comment type="subcellular location">
    <subcellularLocation>
        <location evidence="2">Postsynaptic cell membrane</location>
        <topology evidence="2">Peripheral membrane protein</topology>
        <orientation evidence="2">Cytoplasmic side</orientation>
    </subcellularLocation>
    <subcellularLocation>
        <location evidence="2">Cytoplasm</location>
        <location evidence="2">Cytoskeleton</location>
    </subcellularLocation>
    <text evidence="2">Neuromuscular junction.</text>
</comment>
<comment type="domain">
    <text evidence="2">Actin binding affinity is primarily determined by CH domain 1.</text>
</comment>
<protein>
    <recommendedName>
        <fullName evidence="10">Utrophin</fullName>
    </recommendedName>
    <alternativeName>
        <fullName>Dystrophin-related protein 1</fullName>
        <shortName>DRP-1</shortName>
    </alternativeName>
</protein>
<keyword id="KW-0009">Actin-binding</keyword>
<keyword id="KW-0106">Calcium</keyword>
<keyword id="KW-1003">Cell membrane</keyword>
<keyword id="KW-0175">Coiled coil</keyword>
<keyword id="KW-0963">Cytoplasm</keyword>
<keyword id="KW-0206">Cytoskeleton</keyword>
<keyword id="KW-0472">Membrane</keyword>
<keyword id="KW-0479">Metal-binding</keyword>
<keyword id="KW-0597">Phosphoprotein</keyword>
<keyword id="KW-0628">Postsynaptic cell membrane</keyword>
<keyword id="KW-1185">Reference proteome</keyword>
<keyword id="KW-0677">Repeat</keyword>
<keyword id="KW-0770">Synapse</keyword>
<keyword id="KW-0862">Zinc</keyword>
<keyword id="KW-0863">Zinc-finger</keyword>
<proteinExistence type="evidence at protein level"/>
<organism>
    <name type="scientific">Rattus norvegicus</name>
    <name type="common">Rat</name>
    <dbReference type="NCBI Taxonomy" id="10116"/>
    <lineage>
        <taxon>Eukaryota</taxon>
        <taxon>Metazoa</taxon>
        <taxon>Chordata</taxon>
        <taxon>Craniata</taxon>
        <taxon>Vertebrata</taxon>
        <taxon>Euteleostomi</taxon>
        <taxon>Mammalia</taxon>
        <taxon>Eutheria</taxon>
        <taxon>Euarchontoglires</taxon>
        <taxon>Glires</taxon>
        <taxon>Rodentia</taxon>
        <taxon>Myomorpha</taxon>
        <taxon>Muroidea</taxon>
        <taxon>Muridae</taxon>
        <taxon>Murinae</taxon>
        <taxon>Rattus</taxon>
    </lineage>
</organism>
<name>UTRN_RAT</name>